<comment type="function">
    <molecule>CNP-22</molecule>
    <text evidence="2 3">Hormone which plays a role in endochondral ossification through regulation of cartilaginous growth plate chondrocytes proliferation and differentiation (By similarity). May also be vasoactive and natriuretic. Acts by specifically binding and stimulating NPR2 to produce cGMP. Binds the clearance receptor NPR3 (By similarity).</text>
</comment>
<comment type="subcellular location">
    <subcellularLocation>
        <location>Secreted</location>
    </subcellularLocation>
</comment>
<comment type="PTM">
    <molecule>CNP-22</molecule>
    <text evidence="2">Degraded by IDE (in vitro).</text>
</comment>
<comment type="similarity">
    <text evidence="6">Belongs to the natriuretic peptide family.</text>
</comment>
<evidence type="ECO:0000250" key="1"/>
<evidence type="ECO:0000250" key="2">
    <source>
        <dbReference type="UniProtKB" id="P23582"/>
    </source>
</evidence>
<evidence type="ECO:0000250" key="3">
    <source>
        <dbReference type="UniProtKB" id="Q61839"/>
    </source>
</evidence>
<evidence type="ECO:0000255" key="4"/>
<evidence type="ECO:0000256" key="5">
    <source>
        <dbReference type="SAM" id="MobiDB-lite"/>
    </source>
</evidence>
<evidence type="ECO:0000305" key="6"/>
<accession>P55206</accession>
<accession>A4FUX3</accession>
<name>ANFC_BOVIN</name>
<reference key="1">
    <citation type="journal article" date="1994" name="DNA Cell Biol.">
        <title>cDNA cloning identified a calmodulin-binding protein in bovine seminal plasma as bovine C-type natriuretic peptide.</title>
        <authorList>
            <person name="Hosang K.K."/>
            <person name="Scheit K.K."/>
        </authorList>
    </citation>
    <scope>NUCLEOTIDE SEQUENCE [MRNA]</scope>
</reference>
<reference key="2">
    <citation type="submission" date="2006-09" db="EMBL/GenBank/DDBJ databases">
        <authorList>
            <consortium name="NIH - Mammalian Gene Collection (MGC) project"/>
        </authorList>
    </citation>
    <scope>NUCLEOTIDE SEQUENCE [LARGE SCALE MRNA]</scope>
    <source>
        <strain>Hereford</strain>
        <tissue>Thalamus</tissue>
    </source>
</reference>
<sequence>MHLSQLLACALLLALLSLRPSEAKPGAPPKVPRTPSGEEVAEPQAAGGGQKKGDKTPGGGGANLKDDRSRLLRDLRVDTKSRAAWTRLLHEHPNARKYKGGNKKGLSKGCFGLKLDRIGSMSGLGC</sequence>
<organism>
    <name type="scientific">Bos taurus</name>
    <name type="common">Bovine</name>
    <dbReference type="NCBI Taxonomy" id="9913"/>
    <lineage>
        <taxon>Eukaryota</taxon>
        <taxon>Metazoa</taxon>
        <taxon>Chordata</taxon>
        <taxon>Craniata</taxon>
        <taxon>Vertebrata</taxon>
        <taxon>Euteleostomi</taxon>
        <taxon>Mammalia</taxon>
        <taxon>Eutheria</taxon>
        <taxon>Laurasiatheria</taxon>
        <taxon>Artiodactyla</taxon>
        <taxon>Ruminantia</taxon>
        <taxon>Pecora</taxon>
        <taxon>Bovidae</taxon>
        <taxon>Bovinae</taxon>
        <taxon>Bos</taxon>
    </lineage>
</organism>
<feature type="signal peptide" evidence="4">
    <location>
        <begin position="1"/>
        <end position="23"/>
    </location>
</feature>
<feature type="propeptide" id="PRO_0000001549" evidence="4">
    <location>
        <begin position="24"/>
        <end position="73"/>
    </location>
</feature>
<feature type="peptide" id="PRO_0000001550" description="CNP-53" evidence="1">
    <location>
        <begin position="74"/>
        <end position="126"/>
    </location>
</feature>
<feature type="peptide" id="PRO_0000001551" description="CNP-29" evidence="1">
    <location>
        <begin position="98"/>
        <end position="126"/>
    </location>
</feature>
<feature type="peptide" id="PRO_0000001552" description="CNP-22">
    <location>
        <begin position="105"/>
        <end position="126"/>
    </location>
</feature>
<feature type="region of interest" description="Disordered" evidence="5">
    <location>
        <begin position="20"/>
        <end position="71"/>
    </location>
</feature>
<feature type="compositionally biased region" description="Gly residues" evidence="5">
    <location>
        <begin position="46"/>
        <end position="62"/>
    </location>
</feature>
<feature type="disulfide bond" evidence="1">
    <location>
        <begin position="110"/>
        <end position="126"/>
    </location>
</feature>
<proteinExistence type="evidence at transcript level"/>
<dbReference type="EMBL" id="Z48478">
    <property type="protein sequence ID" value="CAA88369.1"/>
    <property type="molecule type" value="mRNA"/>
</dbReference>
<dbReference type="EMBL" id="Z48477">
    <property type="protein sequence ID" value="CAA88368.1"/>
    <property type="molecule type" value="mRNA"/>
</dbReference>
<dbReference type="EMBL" id="BC123399">
    <property type="protein sequence ID" value="AAI23400.1"/>
    <property type="molecule type" value="mRNA"/>
</dbReference>
<dbReference type="RefSeq" id="NP_776550.1">
    <property type="nucleotide sequence ID" value="NM_174125.2"/>
</dbReference>
<dbReference type="RefSeq" id="XP_005202943.1">
    <property type="nucleotide sequence ID" value="XM_005202886.5"/>
</dbReference>
<dbReference type="FunCoup" id="P55206">
    <property type="interactions" value="103"/>
</dbReference>
<dbReference type="STRING" id="9913.ENSBTAP00000040960"/>
<dbReference type="PaxDb" id="9913-ENSBTAP00000040960"/>
<dbReference type="Ensembl" id="ENSBTAT00000063429.3">
    <property type="protein sequence ID" value="ENSBTAP00000055472.1"/>
    <property type="gene ID" value="ENSBTAG00000003253.7"/>
</dbReference>
<dbReference type="GeneID" id="281356"/>
<dbReference type="KEGG" id="bta:281356"/>
<dbReference type="CTD" id="4880"/>
<dbReference type="VEuPathDB" id="HostDB:ENSBTAG00000003253"/>
<dbReference type="VGNC" id="VGNC:32212">
    <property type="gene designation" value="NPPC"/>
</dbReference>
<dbReference type="eggNOG" id="ENOG502S2QY">
    <property type="taxonomic scope" value="Eukaryota"/>
</dbReference>
<dbReference type="GeneTree" id="ENSGT00390000015492"/>
<dbReference type="HOGENOM" id="CLU_160791_0_0_1"/>
<dbReference type="InParanoid" id="P55206"/>
<dbReference type="OrthoDB" id="8911465at2759"/>
<dbReference type="TreeFam" id="TF106305"/>
<dbReference type="Reactome" id="R-BTA-5578768">
    <property type="pathway name" value="Physiological factors"/>
</dbReference>
<dbReference type="Proteomes" id="UP000009136">
    <property type="component" value="Chromosome 2"/>
</dbReference>
<dbReference type="Bgee" id="ENSBTAG00000003253">
    <property type="expression patterns" value="Expressed in mammary gland fat and 82 other cell types or tissues"/>
</dbReference>
<dbReference type="GO" id="GO:0005576">
    <property type="term" value="C:extracellular region"/>
    <property type="evidence" value="ECO:0007669"/>
    <property type="project" value="UniProtKB-SubCell"/>
</dbReference>
<dbReference type="GO" id="GO:0032991">
    <property type="term" value="C:protein-containing complex"/>
    <property type="evidence" value="ECO:0007669"/>
    <property type="project" value="Ensembl"/>
</dbReference>
<dbReference type="GO" id="GO:0005179">
    <property type="term" value="F:hormone activity"/>
    <property type="evidence" value="ECO:0000318"/>
    <property type="project" value="GO_Central"/>
</dbReference>
<dbReference type="GO" id="GO:0051427">
    <property type="term" value="F:hormone receptor binding"/>
    <property type="evidence" value="ECO:0000318"/>
    <property type="project" value="GO_Central"/>
</dbReference>
<dbReference type="GO" id="GO:0005102">
    <property type="term" value="F:signaling receptor binding"/>
    <property type="evidence" value="ECO:0000250"/>
    <property type="project" value="AgBase"/>
</dbReference>
<dbReference type="GO" id="GO:0001525">
    <property type="term" value="P:angiogenesis"/>
    <property type="evidence" value="ECO:0007669"/>
    <property type="project" value="Ensembl"/>
</dbReference>
<dbReference type="GO" id="GO:0097746">
    <property type="term" value="P:blood vessel diameter maintenance"/>
    <property type="evidence" value="ECO:0007669"/>
    <property type="project" value="UniProtKB-KW"/>
</dbReference>
<dbReference type="GO" id="GO:0001974">
    <property type="term" value="P:blood vessel remodeling"/>
    <property type="evidence" value="ECO:0007669"/>
    <property type="project" value="Ensembl"/>
</dbReference>
<dbReference type="GO" id="GO:0061939">
    <property type="term" value="P:c-di-GMP signaling"/>
    <property type="evidence" value="ECO:0007669"/>
    <property type="project" value="Ensembl"/>
</dbReference>
<dbReference type="GO" id="GO:1904588">
    <property type="term" value="P:cellular response to glycoprotein"/>
    <property type="evidence" value="ECO:0007669"/>
    <property type="project" value="Ensembl"/>
</dbReference>
<dbReference type="GO" id="GO:0006182">
    <property type="term" value="P:cGMP biosynthetic process"/>
    <property type="evidence" value="ECO:0000250"/>
    <property type="project" value="UniProtKB"/>
</dbReference>
<dbReference type="GO" id="GO:0051276">
    <property type="term" value="P:chromosome organization"/>
    <property type="evidence" value="ECO:0007669"/>
    <property type="project" value="Ensembl"/>
</dbReference>
<dbReference type="GO" id="GO:0001549">
    <property type="term" value="P:cumulus cell differentiation"/>
    <property type="evidence" value="ECO:0007669"/>
    <property type="project" value="Ensembl"/>
</dbReference>
<dbReference type="GO" id="GO:0035483">
    <property type="term" value="P:gastric emptying"/>
    <property type="evidence" value="ECO:0007669"/>
    <property type="project" value="Ensembl"/>
</dbReference>
<dbReference type="GO" id="GO:0003418">
    <property type="term" value="P:growth plate cartilage chondrocyte differentiation"/>
    <property type="evidence" value="ECO:0000250"/>
    <property type="project" value="UniProtKB"/>
</dbReference>
<dbReference type="GO" id="GO:0003419">
    <property type="term" value="P:growth plate cartilage chondrocyte proliferation"/>
    <property type="evidence" value="ECO:0000250"/>
    <property type="project" value="UniProtKB"/>
</dbReference>
<dbReference type="GO" id="GO:0006874">
    <property type="term" value="P:intracellular calcium ion homeostasis"/>
    <property type="evidence" value="ECO:0007669"/>
    <property type="project" value="Ensembl"/>
</dbReference>
<dbReference type="GO" id="GO:1903537">
    <property type="term" value="P:meiotic cell cycle process involved in oocyte maturation"/>
    <property type="evidence" value="ECO:0007669"/>
    <property type="project" value="Ensembl"/>
</dbReference>
<dbReference type="GO" id="GO:0071965">
    <property type="term" value="P:multicellular organismal locomotion"/>
    <property type="evidence" value="ECO:0007669"/>
    <property type="project" value="Ensembl"/>
</dbReference>
<dbReference type="GO" id="GO:0051447">
    <property type="term" value="P:negative regulation of meiotic cell cycle"/>
    <property type="evidence" value="ECO:0007669"/>
    <property type="project" value="Ensembl"/>
</dbReference>
<dbReference type="GO" id="GO:0043524">
    <property type="term" value="P:negative regulation of neuron apoptotic process"/>
    <property type="evidence" value="ECO:0007669"/>
    <property type="project" value="Ensembl"/>
</dbReference>
<dbReference type="GO" id="GO:1900194">
    <property type="term" value="P:negative regulation of oocyte maturation"/>
    <property type="evidence" value="ECO:0007669"/>
    <property type="project" value="Ensembl"/>
</dbReference>
<dbReference type="GO" id="GO:0001503">
    <property type="term" value="P:ossification"/>
    <property type="evidence" value="ECO:0007669"/>
    <property type="project" value="UniProtKB-KW"/>
</dbReference>
<dbReference type="GO" id="GO:0009791">
    <property type="term" value="P:post-embryonic development"/>
    <property type="evidence" value="ECO:0007669"/>
    <property type="project" value="Ensembl"/>
</dbReference>
<dbReference type="GO" id="GO:0006457">
    <property type="term" value="P:protein folding"/>
    <property type="evidence" value="ECO:0007669"/>
    <property type="project" value="Ensembl"/>
</dbReference>
<dbReference type="GO" id="GO:0007168">
    <property type="term" value="P:receptor guanylyl cyclase signaling pathway"/>
    <property type="evidence" value="ECO:0000250"/>
    <property type="project" value="UniProtKB"/>
</dbReference>
<dbReference type="GO" id="GO:0040014">
    <property type="term" value="P:regulation of multicellular organism growth"/>
    <property type="evidence" value="ECO:0007669"/>
    <property type="project" value="Ensembl"/>
</dbReference>
<dbReference type="GO" id="GO:0048678">
    <property type="term" value="P:response to axon injury"/>
    <property type="evidence" value="ECO:0007669"/>
    <property type="project" value="Ensembl"/>
</dbReference>
<dbReference type="GO" id="GO:0002931">
    <property type="term" value="P:response to ischemia"/>
    <property type="evidence" value="ECO:0007669"/>
    <property type="project" value="Ensembl"/>
</dbReference>
<dbReference type="GO" id="GO:0090649">
    <property type="term" value="P:response to oxygen-glucose deprivation"/>
    <property type="evidence" value="ECO:0007669"/>
    <property type="project" value="Ensembl"/>
</dbReference>
<dbReference type="InterPro" id="IPR002406">
    <property type="entry name" value="C_natriurtcpep"/>
</dbReference>
<dbReference type="InterPro" id="IPR000663">
    <property type="entry name" value="Natr_peptide"/>
</dbReference>
<dbReference type="InterPro" id="IPR030480">
    <property type="entry name" value="Natr_peptide_CS"/>
</dbReference>
<dbReference type="PANTHER" id="PTHR12167">
    <property type="entry name" value="C-TYPE NATRIURETIC PEPTIDE"/>
    <property type="match status" value="1"/>
</dbReference>
<dbReference type="PANTHER" id="PTHR12167:SF2">
    <property type="entry name" value="C-TYPE NATRIURETIC PEPTIDE"/>
    <property type="match status" value="1"/>
</dbReference>
<dbReference type="Pfam" id="PF00212">
    <property type="entry name" value="ANP"/>
    <property type="match status" value="1"/>
</dbReference>
<dbReference type="PRINTS" id="PR00713">
    <property type="entry name" value="CNATPEPTIDE"/>
</dbReference>
<dbReference type="PRINTS" id="PR00710">
    <property type="entry name" value="NATPEPTIDES"/>
</dbReference>
<dbReference type="SMART" id="SM00183">
    <property type="entry name" value="NAT_PEP"/>
    <property type="match status" value="1"/>
</dbReference>
<dbReference type="PROSITE" id="PS00263">
    <property type="entry name" value="NATRIURETIC_PEPTIDE"/>
    <property type="match status" value="1"/>
</dbReference>
<keyword id="KW-0165">Cleavage on pair of basic residues</keyword>
<keyword id="KW-1015">Disulfide bond</keyword>
<keyword id="KW-0372">Hormone</keyword>
<keyword id="KW-0892">Osteogenesis</keyword>
<keyword id="KW-1185">Reference proteome</keyword>
<keyword id="KW-0964">Secreted</keyword>
<keyword id="KW-0732">Signal</keyword>
<keyword id="KW-0838">Vasoactive</keyword>
<protein>
    <recommendedName>
        <fullName>C-type natriuretic peptide</fullName>
    </recommendedName>
    <alternativeName>
        <fullName>SVSP15</fullName>
    </alternativeName>
    <component>
        <recommendedName>
            <fullName>CNP-22</fullName>
        </recommendedName>
    </component>
    <component>
        <recommendedName>
            <fullName>CNP-29</fullName>
        </recommendedName>
    </component>
    <component>
        <recommendedName>
            <fullName>CNP-53</fullName>
        </recommendedName>
    </component>
</protein>
<gene>
    <name type="primary">NPPC</name>
</gene>